<sequence length="72" mass="7981">MKVGIHPEYTAVKATCSCGNEFEFNSALGKDSIHLDVCDKCHPFYTGKQRIVDTGGRVDRFNKRFGAIGSKK</sequence>
<gene>
    <name evidence="1" type="primary">rpmE</name>
    <name type="ordered locus">VF_2273</name>
</gene>
<evidence type="ECO:0000255" key="1">
    <source>
        <dbReference type="HAMAP-Rule" id="MF_00501"/>
    </source>
</evidence>
<evidence type="ECO:0000305" key="2"/>
<proteinExistence type="inferred from homology"/>
<protein>
    <recommendedName>
        <fullName evidence="1">Large ribosomal subunit protein bL31</fullName>
    </recommendedName>
    <alternativeName>
        <fullName evidence="2">50S ribosomal protein L31</fullName>
    </alternativeName>
</protein>
<name>RL31_ALIF1</name>
<feature type="chain" id="PRO_0000173177" description="Large ribosomal subunit protein bL31">
    <location>
        <begin position="1"/>
        <end position="72"/>
    </location>
</feature>
<feature type="binding site" evidence="1">
    <location>
        <position position="16"/>
    </location>
    <ligand>
        <name>Zn(2+)</name>
        <dbReference type="ChEBI" id="CHEBI:29105"/>
    </ligand>
</feature>
<feature type="binding site" evidence="1">
    <location>
        <position position="18"/>
    </location>
    <ligand>
        <name>Zn(2+)</name>
        <dbReference type="ChEBI" id="CHEBI:29105"/>
    </ligand>
</feature>
<feature type="binding site" evidence="1">
    <location>
        <position position="38"/>
    </location>
    <ligand>
        <name>Zn(2+)</name>
        <dbReference type="ChEBI" id="CHEBI:29105"/>
    </ligand>
</feature>
<feature type="binding site" evidence="1">
    <location>
        <position position="41"/>
    </location>
    <ligand>
        <name>Zn(2+)</name>
        <dbReference type="ChEBI" id="CHEBI:29105"/>
    </ligand>
</feature>
<organism>
    <name type="scientific">Aliivibrio fischeri (strain ATCC 700601 / ES114)</name>
    <name type="common">Vibrio fischeri</name>
    <dbReference type="NCBI Taxonomy" id="312309"/>
    <lineage>
        <taxon>Bacteria</taxon>
        <taxon>Pseudomonadati</taxon>
        <taxon>Pseudomonadota</taxon>
        <taxon>Gammaproteobacteria</taxon>
        <taxon>Vibrionales</taxon>
        <taxon>Vibrionaceae</taxon>
        <taxon>Aliivibrio</taxon>
    </lineage>
</organism>
<accession>Q5E2H8</accession>
<comment type="function">
    <text evidence="1">Binds the 23S rRNA.</text>
</comment>
<comment type="cofactor">
    <cofactor evidence="1">
        <name>Zn(2+)</name>
        <dbReference type="ChEBI" id="CHEBI:29105"/>
    </cofactor>
    <text evidence="1">Binds 1 zinc ion per subunit.</text>
</comment>
<comment type="subunit">
    <text evidence="1">Part of the 50S ribosomal subunit.</text>
</comment>
<comment type="similarity">
    <text evidence="1">Belongs to the bacterial ribosomal protein bL31 family. Type A subfamily.</text>
</comment>
<keyword id="KW-0479">Metal-binding</keyword>
<keyword id="KW-1185">Reference proteome</keyword>
<keyword id="KW-0687">Ribonucleoprotein</keyword>
<keyword id="KW-0689">Ribosomal protein</keyword>
<keyword id="KW-0694">RNA-binding</keyword>
<keyword id="KW-0699">rRNA-binding</keyword>
<keyword id="KW-0862">Zinc</keyword>
<dbReference type="EMBL" id="CP000020">
    <property type="protein sequence ID" value="AAW86768.1"/>
    <property type="molecule type" value="Genomic_DNA"/>
</dbReference>
<dbReference type="RefSeq" id="WP_005421061.1">
    <property type="nucleotide sequence ID" value="NZ_CAWLES010000001.1"/>
</dbReference>
<dbReference type="RefSeq" id="YP_205656.1">
    <property type="nucleotide sequence ID" value="NC_006840.2"/>
</dbReference>
<dbReference type="SMR" id="Q5E2H8"/>
<dbReference type="STRING" id="312309.VF_2273"/>
<dbReference type="EnsemblBacteria" id="AAW86768">
    <property type="protein sequence ID" value="AAW86768"/>
    <property type="gene ID" value="VF_2273"/>
</dbReference>
<dbReference type="GeneID" id="54164988"/>
<dbReference type="KEGG" id="vfi:VF_2273"/>
<dbReference type="PATRIC" id="fig|312309.11.peg.2311"/>
<dbReference type="eggNOG" id="COG0254">
    <property type="taxonomic scope" value="Bacteria"/>
</dbReference>
<dbReference type="HOGENOM" id="CLU_114306_4_3_6"/>
<dbReference type="OrthoDB" id="9803251at2"/>
<dbReference type="Proteomes" id="UP000000537">
    <property type="component" value="Chromosome I"/>
</dbReference>
<dbReference type="GO" id="GO:1990904">
    <property type="term" value="C:ribonucleoprotein complex"/>
    <property type="evidence" value="ECO:0007669"/>
    <property type="project" value="UniProtKB-KW"/>
</dbReference>
<dbReference type="GO" id="GO:0005840">
    <property type="term" value="C:ribosome"/>
    <property type="evidence" value="ECO:0007669"/>
    <property type="project" value="UniProtKB-KW"/>
</dbReference>
<dbReference type="GO" id="GO:0046872">
    <property type="term" value="F:metal ion binding"/>
    <property type="evidence" value="ECO:0007669"/>
    <property type="project" value="UniProtKB-KW"/>
</dbReference>
<dbReference type="GO" id="GO:0019843">
    <property type="term" value="F:rRNA binding"/>
    <property type="evidence" value="ECO:0007669"/>
    <property type="project" value="UniProtKB-KW"/>
</dbReference>
<dbReference type="GO" id="GO:0003735">
    <property type="term" value="F:structural constituent of ribosome"/>
    <property type="evidence" value="ECO:0007669"/>
    <property type="project" value="InterPro"/>
</dbReference>
<dbReference type="GO" id="GO:0006412">
    <property type="term" value="P:translation"/>
    <property type="evidence" value="ECO:0007669"/>
    <property type="project" value="UniProtKB-UniRule"/>
</dbReference>
<dbReference type="Gene3D" id="4.10.830.30">
    <property type="entry name" value="Ribosomal protein L31"/>
    <property type="match status" value="1"/>
</dbReference>
<dbReference type="HAMAP" id="MF_00501">
    <property type="entry name" value="Ribosomal_bL31_1"/>
    <property type="match status" value="1"/>
</dbReference>
<dbReference type="InterPro" id="IPR034704">
    <property type="entry name" value="Ribosomal_bL28/bL31-like_sf"/>
</dbReference>
<dbReference type="InterPro" id="IPR002150">
    <property type="entry name" value="Ribosomal_bL31"/>
</dbReference>
<dbReference type="InterPro" id="IPR027491">
    <property type="entry name" value="Ribosomal_bL31_A"/>
</dbReference>
<dbReference type="InterPro" id="IPR042105">
    <property type="entry name" value="Ribosomal_bL31_sf"/>
</dbReference>
<dbReference type="NCBIfam" id="TIGR00105">
    <property type="entry name" value="L31"/>
    <property type="match status" value="1"/>
</dbReference>
<dbReference type="NCBIfam" id="NF000612">
    <property type="entry name" value="PRK00019.1"/>
    <property type="match status" value="1"/>
</dbReference>
<dbReference type="NCBIfam" id="NF001809">
    <property type="entry name" value="PRK00528.1"/>
    <property type="match status" value="1"/>
</dbReference>
<dbReference type="PANTHER" id="PTHR33280">
    <property type="entry name" value="50S RIBOSOMAL PROTEIN L31, CHLOROPLASTIC"/>
    <property type="match status" value="1"/>
</dbReference>
<dbReference type="PANTHER" id="PTHR33280:SF6">
    <property type="entry name" value="LARGE RIBOSOMAL SUBUNIT PROTEIN BL31A"/>
    <property type="match status" value="1"/>
</dbReference>
<dbReference type="Pfam" id="PF01197">
    <property type="entry name" value="Ribosomal_L31"/>
    <property type="match status" value="1"/>
</dbReference>
<dbReference type="PRINTS" id="PR01249">
    <property type="entry name" value="RIBOSOMALL31"/>
</dbReference>
<dbReference type="SUPFAM" id="SSF143800">
    <property type="entry name" value="L28p-like"/>
    <property type="match status" value="1"/>
</dbReference>
<dbReference type="PROSITE" id="PS01143">
    <property type="entry name" value="RIBOSOMAL_L31"/>
    <property type="match status" value="1"/>
</dbReference>
<reference key="1">
    <citation type="journal article" date="2005" name="Proc. Natl. Acad. Sci. U.S.A.">
        <title>Complete genome sequence of Vibrio fischeri: a symbiotic bacterium with pathogenic congeners.</title>
        <authorList>
            <person name="Ruby E.G."/>
            <person name="Urbanowski M."/>
            <person name="Campbell J."/>
            <person name="Dunn A."/>
            <person name="Faini M."/>
            <person name="Gunsalus R."/>
            <person name="Lostroh P."/>
            <person name="Lupp C."/>
            <person name="McCann J."/>
            <person name="Millikan D."/>
            <person name="Schaefer A."/>
            <person name="Stabb E."/>
            <person name="Stevens A."/>
            <person name="Visick K."/>
            <person name="Whistler C."/>
            <person name="Greenberg E.P."/>
        </authorList>
    </citation>
    <scope>NUCLEOTIDE SEQUENCE [LARGE SCALE GENOMIC DNA]</scope>
    <source>
        <strain>ATCC 700601 / ES114</strain>
    </source>
</reference>